<reference key="1">
    <citation type="submission" date="1998-01" db="EMBL/GenBank/DDBJ databases">
        <authorList>
            <person name="Fong K."/>
            <person name="Zabarovsky E."/>
            <person name="Kashuba V."/>
            <person name="Kuzmin I."/>
            <person name="Latif F."/>
            <person name="Mele G."/>
            <person name="Sekido Y."/>
            <person name="Bader S."/>
            <person name="Duh F.-M."/>
            <person name="Wei M.-H."/>
            <person name="Lerman M.I."/>
            <person name="Minna J.D."/>
        </authorList>
    </citation>
    <scope>NUCLEOTIDE SEQUENCE [MRNA] (ISOFORM 1)</scope>
</reference>
<reference key="2">
    <citation type="journal article" date="2006" name="Nature">
        <title>The DNA sequence, annotation and analysis of human chromosome 3.</title>
        <authorList>
            <person name="Muzny D.M."/>
            <person name="Scherer S.E."/>
            <person name="Kaul R."/>
            <person name="Wang J."/>
            <person name="Yu J."/>
            <person name="Sudbrak R."/>
            <person name="Buhay C.J."/>
            <person name="Chen R."/>
            <person name="Cree A."/>
            <person name="Ding Y."/>
            <person name="Dugan-Rocha S."/>
            <person name="Gill R."/>
            <person name="Gunaratne P."/>
            <person name="Harris R.A."/>
            <person name="Hawes A.C."/>
            <person name="Hernandez J."/>
            <person name="Hodgson A.V."/>
            <person name="Hume J."/>
            <person name="Jackson A."/>
            <person name="Khan Z.M."/>
            <person name="Kovar-Smith C."/>
            <person name="Lewis L.R."/>
            <person name="Lozado R.J."/>
            <person name="Metzker M.L."/>
            <person name="Milosavljevic A."/>
            <person name="Miner G.R."/>
            <person name="Morgan M.B."/>
            <person name="Nazareth L.V."/>
            <person name="Scott G."/>
            <person name="Sodergren E."/>
            <person name="Song X.-Z."/>
            <person name="Steffen D."/>
            <person name="Wei S."/>
            <person name="Wheeler D.A."/>
            <person name="Wright M.W."/>
            <person name="Worley K.C."/>
            <person name="Yuan Y."/>
            <person name="Zhang Z."/>
            <person name="Adams C.Q."/>
            <person name="Ansari-Lari M.A."/>
            <person name="Ayele M."/>
            <person name="Brown M.J."/>
            <person name="Chen G."/>
            <person name="Chen Z."/>
            <person name="Clendenning J."/>
            <person name="Clerc-Blankenburg K.P."/>
            <person name="Chen R."/>
            <person name="Chen Z."/>
            <person name="Davis C."/>
            <person name="Delgado O."/>
            <person name="Dinh H.H."/>
            <person name="Dong W."/>
            <person name="Draper H."/>
            <person name="Ernst S."/>
            <person name="Fu G."/>
            <person name="Gonzalez-Garay M.L."/>
            <person name="Garcia D.K."/>
            <person name="Gillett W."/>
            <person name="Gu J."/>
            <person name="Hao B."/>
            <person name="Haugen E."/>
            <person name="Havlak P."/>
            <person name="He X."/>
            <person name="Hennig S."/>
            <person name="Hu S."/>
            <person name="Huang W."/>
            <person name="Jackson L.R."/>
            <person name="Jacob L.S."/>
            <person name="Kelly S.H."/>
            <person name="Kube M."/>
            <person name="Levy R."/>
            <person name="Li Z."/>
            <person name="Liu B."/>
            <person name="Liu J."/>
            <person name="Liu W."/>
            <person name="Lu J."/>
            <person name="Maheshwari M."/>
            <person name="Nguyen B.-V."/>
            <person name="Okwuonu G.O."/>
            <person name="Palmeiri A."/>
            <person name="Pasternak S."/>
            <person name="Perez L.M."/>
            <person name="Phelps K.A."/>
            <person name="Plopper F.J."/>
            <person name="Qiang B."/>
            <person name="Raymond C."/>
            <person name="Rodriguez R."/>
            <person name="Saenphimmachak C."/>
            <person name="Santibanez J."/>
            <person name="Shen H."/>
            <person name="Shen Y."/>
            <person name="Subramanian S."/>
            <person name="Tabor P.E."/>
            <person name="Verduzco D."/>
            <person name="Waldron L."/>
            <person name="Wang J."/>
            <person name="Wang J."/>
            <person name="Wang Q."/>
            <person name="Williams G.A."/>
            <person name="Wong G.K.-S."/>
            <person name="Yao Z."/>
            <person name="Zhang J."/>
            <person name="Zhang X."/>
            <person name="Zhao G."/>
            <person name="Zhou J."/>
            <person name="Zhou Y."/>
            <person name="Nelson D."/>
            <person name="Lehrach H."/>
            <person name="Reinhardt R."/>
            <person name="Naylor S.L."/>
            <person name="Yang H."/>
            <person name="Olson M."/>
            <person name="Weinstock G."/>
            <person name="Gibbs R.A."/>
        </authorList>
    </citation>
    <scope>NUCLEOTIDE SEQUENCE [LARGE SCALE GENOMIC DNA]</scope>
</reference>
<reference key="3">
    <citation type="journal article" date="2004" name="Genome Res.">
        <title>The status, quality, and expansion of the NIH full-length cDNA project: the Mammalian Gene Collection (MGC).</title>
        <authorList>
            <consortium name="The MGC Project Team"/>
        </authorList>
    </citation>
    <scope>NUCLEOTIDE SEQUENCE [LARGE SCALE MRNA] (ISOFORM 2)</scope>
    <source>
        <tissue>Pancreas</tissue>
    </source>
</reference>
<reference key="4">
    <citation type="journal article" date="2000" name="Oncogene">
        <title>The putative tumour suppressor Fus-2 is an N-acetyltransferase.</title>
        <authorList>
            <person name="Zegerman P."/>
            <person name="Bannister A.J."/>
            <person name="Kouzarides T."/>
        </authorList>
    </citation>
    <scope>FUNCTION</scope>
    <scope>SUBCELLULAR LOCATION</scope>
</reference>
<reference key="5">
    <citation type="journal article" date="2000" name="Cancer Res.">
        <title>The 630-kb lung cancer homozygous deletion region on human chromosome 3p21.3: identification and evaluation of the resident candidate tumor suppressor genes.</title>
        <authorList>
            <consortium name="The international lung cancer chromosome 3p21.3 tumor suppressor gene consortium"/>
            <person name="Lerman M.I."/>
            <person name="Minna J.D."/>
        </authorList>
    </citation>
    <scope>DISCUSSION OF SEQUENCE</scope>
    <scope>TISSUE SPECIFICITY</scope>
    <scope>VARIANTS SER-145 AND SER-207</scope>
</reference>
<reference key="6">
    <citation type="journal article" date="2018" name="FEBS J.">
        <title>NAT6 acetylates the N-terminus of different forms of actin.</title>
        <authorList>
            <person name="Wiame E."/>
            <person name="Tahay G."/>
            <person name="Tyteca D."/>
            <person name="Vertommen D."/>
            <person name="Stroobant V."/>
            <person name="Bommer G.T."/>
            <person name="Van Schaftingen E."/>
        </authorList>
    </citation>
    <scope>FUNCTION</scope>
</reference>
<reference key="7">
    <citation type="journal article" date="2018" name="Proc. Natl. Acad. Sci. U.S.A.">
        <title>NAA80 is actin's N-terminal acetyltransferase and regulates cytoskeleton assembly and cell motility.</title>
        <authorList>
            <person name="Drazic A."/>
            <person name="Aksnes H."/>
            <person name="Marie M."/>
            <person name="Boczkowska M."/>
            <person name="Varland S."/>
            <person name="Timmerman E."/>
            <person name="Foyn H."/>
            <person name="Glomnes N."/>
            <person name="Rebowski G."/>
            <person name="Impens F."/>
            <person name="Gevaert K."/>
            <person name="Dominguez R."/>
            <person name="Arnesen T."/>
        </authorList>
    </citation>
    <scope>FUNCTION</scope>
    <scope>CATALYTIC ACTIVITY</scope>
    <scope>SUBCELLULAR LOCATION</scope>
    <scope>MUTAGENESIS OF TRP-83; ARG-148; GLY-151 AND TYR-183</scope>
</reference>
<reference key="8">
    <citation type="journal article" date="2018" name="Proc. Natl. Acad. Sci. U.S.A.">
        <title>Structural determinants and cellular environment define processed actin as the sole substrate of the N-terminal acetyltransferase NAA80.</title>
        <authorList>
            <person name="Goris M."/>
            <person name="Magin R.S."/>
            <person name="Foyn H."/>
            <person name="Myklebust L.M."/>
            <person name="Varland S."/>
            <person name="Ree R."/>
            <person name="Drazic A."/>
            <person name="Bhambra P."/>
            <person name="Stoeve S.I."/>
            <person name="Baumann M."/>
            <person name="Haug B.E."/>
            <person name="Marmorstein R."/>
            <person name="Arnesen T."/>
        </authorList>
    </citation>
    <scope>FUNCTION</scope>
    <scope>CATALYTIC ACTIVITY</scope>
</reference>
<reference key="9">
    <citation type="journal article" date="2021" name="Brain Commun.">
        <title>NAA80 bi-allelic missense variants result in high-frequency hearing loss, muscle weakness and developmental delay.</title>
        <authorList>
            <person name="Muffels I.J.J."/>
            <person name="Wiame E."/>
            <person name="Fuchs S.A."/>
            <person name="Massink M.P.G."/>
            <person name="Rehmann H."/>
            <person name="Musch J.L.I."/>
            <person name="Van Haaften G."/>
            <person name="Vertommen D."/>
            <person name="van Schaftingen E."/>
            <person name="van Hasselt P.M."/>
        </authorList>
    </citation>
    <scope>INVOLVEMENT IN ANDS</scope>
    <scope>VARIANT ANDS PRO-130</scope>
    <scope>CHARACTERIZATION OF VARIANT ANDS PRO-130</scope>
</reference>
<accession>Q93015</accession>
<accession>Q93014</accession>
<dbReference type="EC" id="2.3.1.-" evidence="6 7 8"/>
<dbReference type="EMBL" id="AF040706">
    <property type="protein sequence ID" value="AAC70913.1"/>
    <property type="molecule type" value="mRNA"/>
</dbReference>
<dbReference type="EMBL" id="AF040705">
    <property type="protein sequence ID" value="AAC70912.1"/>
    <property type="molecule type" value="mRNA"/>
</dbReference>
<dbReference type="EMBL" id="U73167">
    <property type="protein sequence ID" value="AAC02732.1"/>
    <property type="molecule type" value="Genomic_DNA"/>
</dbReference>
<dbReference type="EMBL" id="BC004483">
    <property type="protein sequence ID" value="AAH04483.2"/>
    <property type="molecule type" value="mRNA"/>
</dbReference>
<dbReference type="CCDS" id="CCDS43095.1">
    <molecule id="Q93015-2"/>
</dbReference>
<dbReference type="CCDS" id="CCDS56258.1">
    <molecule id="Q93015-1"/>
</dbReference>
<dbReference type="RefSeq" id="NP_001186945.1">
    <molecule id="Q93015-1"/>
    <property type="nucleotide sequence ID" value="NM_001200016.2"/>
</dbReference>
<dbReference type="RefSeq" id="NP_001186947.1">
    <molecule id="Q93015-1"/>
    <property type="nucleotide sequence ID" value="NM_001200018.2"/>
</dbReference>
<dbReference type="RefSeq" id="NP_036323.2">
    <molecule id="Q93015-2"/>
    <property type="nucleotide sequence ID" value="NM_012191.3"/>
</dbReference>
<dbReference type="PDB" id="6NAS">
    <property type="method" value="X-ray"/>
    <property type="resolution" value="2.90 A"/>
    <property type="chains" value="N=56-286"/>
</dbReference>
<dbReference type="PDB" id="6NBE">
    <property type="method" value="X-ray"/>
    <property type="resolution" value="2.00 A"/>
    <property type="chains" value="N=56-286"/>
</dbReference>
<dbReference type="PDB" id="6NBW">
    <property type="method" value="X-ray"/>
    <property type="resolution" value="2.50 A"/>
    <property type="chains" value="N=56-286"/>
</dbReference>
<dbReference type="PDBsum" id="6NAS"/>
<dbReference type="PDBsum" id="6NBE"/>
<dbReference type="PDBsum" id="6NBW"/>
<dbReference type="SMR" id="Q93015"/>
<dbReference type="BioGRID" id="117293">
    <property type="interactions" value="14"/>
</dbReference>
<dbReference type="FunCoup" id="Q93015">
    <property type="interactions" value="528"/>
</dbReference>
<dbReference type="IntAct" id="Q93015">
    <property type="interactions" value="12"/>
</dbReference>
<dbReference type="STRING" id="9606.ENSP00000346927"/>
<dbReference type="GlyGen" id="Q93015">
    <property type="glycosylation" value="1 site, 1 N-linked glycan (1 site)"/>
</dbReference>
<dbReference type="iPTMnet" id="Q93015"/>
<dbReference type="PhosphoSitePlus" id="Q93015"/>
<dbReference type="BioMuta" id="NAT6"/>
<dbReference type="DMDM" id="25008833"/>
<dbReference type="jPOST" id="Q93015"/>
<dbReference type="MassIVE" id="Q93015"/>
<dbReference type="PaxDb" id="9606-ENSP00000346927"/>
<dbReference type="PeptideAtlas" id="Q93015"/>
<dbReference type="ProteomicsDB" id="75670">
    <molecule id="Q93015-1"/>
</dbReference>
<dbReference type="ProteomicsDB" id="75671">
    <molecule id="Q93015-2"/>
</dbReference>
<dbReference type="Pumba" id="Q93015"/>
<dbReference type="Antibodypedia" id="34876">
    <property type="antibodies" value="188 antibodies from 22 providers"/>
</dbReference>
<dbReference type="DNASU" id="24142"/>
<dbReference type="Ensembl" id="ENST00000354862.4">
    <molecule id="Q93015-2"/>
    <property type="protein sequence ID" value="ENSP00000346927.4"/>
    <property type="gene ID" value="ENSG00000243477.6"/>
</dbReference>
<dbReference type="Ensembl" id="ENST00000417393.1">
    <molecule id="Q93015-1"/>
    <property type="protein sequence ID" value="ENSP00000391893.1"/>
    <property type="gene ID" value="ENSG00000243477.6"/>
</dbReference>
<dbReference type="Ensembl" id="ENST00000443094.3">
    <molecule id="Q93015-1"/>
    <property type="protein sequence ID" value="ENSP00000410610.2"/>
    <property type="gene ID" value="ENSG00000243477.6"/>
</dbReference>
<dbReference type="Ensembl" id="ENST00000443842.1">
    <molecule id="Q93015-1"/>
    <property type="protein sequence ID" value="ENSP00000400559.1"/>
    <property type="gene ID" value="ENSG00000243477.6"/>
</dbReference>
<dbReference type="GeneID" id="24142"/>
<dbReference type="KEGG" id="hsa:24142"/>
<dbReference type="MANE-Select" id="ENST00000443094.3">
    <property type="protein sequence ID" value="ENSP00000410610.2"/>
    <property type="RefSeq nucleotide sequence ID" value="NM_001200016.2"/>
    <property type="RefSeq protein sequence ID" value="NP_001186945.1"/>
</dbReference>
<dbReference type="UCSC" id="uc003czi.4">
    <molecule id="Q93015-1"/>
    <property type="organism name" value="human"/>
</dbReference>
<dbReference type="AGR" id="HGNC:30252"/>
<dbReference type="CTD" id="24142"/>
<dbReference type="DisGeNET" id="24142"/>
<dbReference type="GeneCards" id="NAA80"/>
<dbReference type="HGNC" id="HGNC:30252">
    <property type="gene designation" value="NAA80"/>
</dbReference>
<dbReference type="HPA" id="ENSG00000243477">
    <property type="expression patterns" value="Tissue enhanced (testis)"/>
</dbReference>
<dbReference type="MalaCards" id="NAA80"/>
<dbReference type="MIM" id="607073">
    <property type="type" value="gene"/>
</dbReference>
<dbReference type="MIM" id="620830">
    <property type="type" value="phenotype"/>
</dbReference>
<dbReference type="neXtProt" id="NX_Q93015"/>
<dbReference type="OpenTargets" id="ENSG00000243477"/>
<dbReference type="PharmGKB" id="PA134979782"/>
<dbReference type="VEuPathDB" id="HostDB:ENSG00000243477"/>
<dbReference type="eggNOG" id="KOG3397">
    <property type="taxonomic scope" value="Eukaryota"/>
</dbReference>
<dbReference type="GeneTree" id="ENSGT00390000000980"/>
<dbReference type="HOGENOM" id="CLU_077855_0_0_1"/>
<dbReference type="InParanoid" id="Q93015"/>
<dbReference type="OMA" id="IYWMHKD"/>
<dbReference type="OrthoDB" id="329272at2759"/>
<dbReference type="PAN-GO" id="Q93015">
    <property type="GO annotations" value="4 GO annotations based on evolutionary models"/>
</dbReference>
<dbReference type="PhylomeDB" id="Q93015"/>
<dbReference type="TreeFam" id="TF106312"/>
<dbReference type="BioCyc" id="MetaCyc:MONOMER66-43060"/>
<dbReference type="BRENDA" id="2.3.1.B44">
    <property type="organism ID" value="2681"/>
</dbReference>
<dbReference type="PathwayCommons" id="Q93015"/>
<dbReference type="SABIO-RK" id="Q93015"/>
<dbReference type="SignaLink" id="Q93015"/>
<dbReference type="BioGRID-ORCS" id="24142">
    <property type="hits" value="13 hits in 1149 CRISPR screens"/>
</dbReference>
<dbReference type="GenomeRNAi" id="24142"/>
<dbReference type="Pharos" id="Q93015">
    <property type="development level" value="Tbio"/>
</dbReference>
<dbReference type="PRO" id="PR:Q93015"/>
<dbReference type="Proteomes" id="UP000005640">
    <property type="component" value="Chromosome 3"/>
</dbReference>
<dbReference type="RNAct" id="Q93015">
    <property type="molecule type" value="protein"/>
</dbReference>
<dbReference type="Bgee" id="ENSG00000243477">
    <property type="expression patterns" value="Expressed in left testis and 103 other cell types or tissues"/>
</dbReference>
<dbReference type="ExpressionAtlas" id="Q93015">
    <property type="expression patterns" value="baseline and differential"/>
</dbReference>
<dbReference type="GO" id="GO:0005737">
    <property type="term" value="C:cytoplasm"/>
    <property type="evidence" value="ECO:0000314"/>
    <property type="project" value="UniProtKB"/>
</dbReference>
<dbReference type="GO" id="GO:0005829">
    <property type="term" value="C:cytosol"/>
    <property type="evidence" value="ECO:0000314"/>
    <property type="project" value="UniProtKB"/>
</dbReference>
<dbReference type="GO" id="GO:1905502">
    <property type="term" value="F:acetyl-CoA binding"/>
    <property type="evidence" value="ECO:0000314"/>
    <property type="project" value="UniProtKB"/>
</dbReference>
<dbReference type="GO" id="GO:0008080">
    <property type="term" value="F:N-acetyltransferase activity"/>
    <property type="evidence" value="ECO:0000314"/>
    <property type="project" value="UniProtKB"/>
</dbReference>
<dbReference type="GO" id="GO:0004596">
    <property type="term" value="F:protein-N-terminal amino-acid acetyltransferase activity"/>
    <property type="evidence" value="ECO:0000314"/>
    <property type="project" value="UniProtKB"/>
</dbReference>
<dbReference type="GO" id="GO:0030047">
    <property type="term" value="P:actin modification"/>
    <property type="evidence" value="ECO:0000314"/>
    <property type="project" value="UniProtKB"/>
</dbReference>
<dbReference type="GO" id="GO:0017190">
    <property type="term" value="P:N-terminal peptidyl-aspartic acid acetylation"/>
    <property type="evidence" value="ECO:0000314"/>
    <property type="project" value="UniProtKB"/>
</dbReference>
<dbReference type="GO" id="GO:0018002">
    <property type="term" value="P:N-terminal peptidyl-glutamic acid acetylation"/>
    <property type="evidence" value="ECO:0000314"/>
    <property type="project" value="UniProtKB"/>
</dbReference>
<dbReference type="GO" id="GO:0006473">
    <property type="term" value="P:protein acetylation"/>
    <property type="evidence" value="ECO:0000314"/>
    <property type="project" value="UniProtKB"/>
</dbReference>
<dbReference type="GO" id="GO:0008064">
    <property type="term" value="P:regulation of actin polymerization or depolymerization"/>
    <property type="evidence" value="ECO:0000315"/>
    <property type="project" value="UniProtKB"/>
</dbReference>
<dbReference type="CDD" id="cd04301">
    <property type="entry name" value="NAT_SF"/>
    <property type="match status" value="1"/>
</dbReference>
<dbReference type="FunFam" id="3.40.630.30:FF:000061">
    <property type="entry name" value="N(alpha)-acetyltransferase 80, NatH catalytic subunit"/>
    <property type="match status" value="1"/>
</dbReference>
<dbReference type="Gene3D" id="3.40.630.30">
    <property type="match status" value="1"/>
</dbReference>
<dbReference type="InterPro" id="IPR016181">
    <property type="entry name" value="Acyl_CoA_acyltransferase"/>
</dbReference>
<dbReference type="InterPro" id="IPR000182">
    <property type="entry name" value="GNAT_dom"/>
</dbReference>
<dbReference type="InterPro" id="IPR039840">
    <property type="entry name" value="NAA80"/>
</dbReference>
<dbReference type="PANTHER" id="PTHR13538">
    <property type="entry name" value="N-ACETYLTRANSFERASE 6"/>
    <property type="match status" value="1"/>
</dbReference>
<dbReference type="PANTHER" id="PTHR13538:SF4">
    <property type="entry name" value="N-ALPHA-ACETYLTRANSFERASE 80"/>
    <property type="match status" value="1"/>
</dbReference>
<dbReference type="Pfam" id="PF00583">
    <property type="entry name" value="Acetyltransf_1"/>
    <property type="match status" value="1"/>
</dbReference>
<dbReference type="SUPFAM" id="SSF55729">
    <property type="entry name" value="Acyl-CoA N-acyltransferases (Nat)"/>
    <property type="match status" value="1"/>
</dbReference>
<dbReference type="PROSITE" id="PS51186">
    <property type="entry name" value="GNAT"/>
    <property type="match status" value="1"/>
</dbReference>
<sequence length="286" mass="31445">MELILSTSPAELTLDPACQPKLPLDSTCQPEMTFNPGPTELTLDPEHQPEETPAPSLAELTLEPVHRRPELLDACADLINDQWPRSRTSRLHSLGQSSDAFPLCLMLLSPHPTLEAAPVVVGHARLSRVLNQPQSLLVETVVVARALRGRGFGRRLMEGLEVFARARGFRKLHLTTHDQVHFYTHLGYQLGEPVQGLVFTSRRLPATLLNAFPTAPSPRPPRKAPNLTAQAAPRGPKGPPLPPPPPLPECLTISPPVPSGPPSKSLLETQYQNVRGRPIFWMEKDI</sequence>
<protein>
    <recommendedName>
        <fullName>N-alpha-acetyltransferase 80</fullName>
        <shortName evidence="13">HsNAAA80</shortName>
        <ecNumber evidence="6 7 8">2.3.1.-</ecNumber>
    </recommendedName>
    <alternativeName>
        <fullName evidence="14">N-acetyltransferase 6</fullName>
    </alternativeName>
    <alternativeName>
        <fullName evidence="10">Protein fusion-2</fullName>
        <shortName evidence="10">Protein fus-2</shortName>
    </alternativeName>
</protein>
<feature type="chain" id="PRO_0000074536" description="N-alpha-acetyltransferase 80">
    <location>
        <begin position="1"/>
        <end position="286"/>
    </location>
</feature>
<feature type="domain" description="N-acetyltransferase" evidence="2">
    <location>
        <begin position="60"/>
        <end position="207"/>
    </location>
</feature>
<feature type="region of interest" description="Disordered" evidence="3">
    <location>
        <begin position="33"/>
        <end position="54"/>
    </location>
</feature>
<feature type="region of interest" description="Disordered" evidence="3">
    <location>
        <begin position="212"/>
        <end position="269"/>
    </location>
</feature>
<feature type="compositionally biased region" description="Pro residues" evidence="3">
    <location>
        <begin position="236"/>
        <end position="248"/>
    </location>
</feature>
<feature type="binding site" evidence="1">
    <location>
        <position position="85"/>
    </location>
    <ligand>
        <name>substrate</name>
    </ligand>
</feature>
<feature type="binding site" evidence="1">
    <location>
        <begin position="90"/>
        <end position="93"/>
    </location>
    <ligand>
        <name>substrate</name>
    </ligand>
</feature>
<feature type="binding site" evidence="1">
    <location>
        <begin position="141"/>
        <end position="143"/>
    </location>
    <ligand>
        <name>acetyl-CoA</name>
        <dbReference type="ChEBI" id="CHEBI:57288"/>
    </ligand>
</feature>
<feature type="binding site" evidence="1">
    <location>
        <begin position="149"/>
        <end position="154"/>
    </location>
    <ligand>
        <name>acetyl-CoA</name>
        <dbReference type="ChEBI" id="CHEBI:57288"/>
    </ligand>
</feature>
<feature type="binding site" evidence="1">
    <location>
        <position position="179"/>
    </location>
    <ligand>
        <name>acetyl-CoA</name>
        <dbReference type="ChEBI" id="CHEBI:57288"/>
    </ligand>
</feature>
<feature type="splice variant" id="VSP_037187" description="In isoform 2." evidence="11">
    <original>M</original>
    <variation>MQELTLSPGPAKLTPTLDPTHRM</variation>
    <location>
        <position position="1"/>
    </location>
</feature>
<feature type="sequence variant" id="VAR_089740" description="In ANDS; likely pathogenic; strong decrease in protein expression." evidence="9">
    <original>L</original>
    <variation>P</variation>
    <location>
        <position position="130"/>
    </location>
</feature>
<feature type="sequence variant" id="VAR_014224" description="In non-small cell lung cancer cell lines." evidence="5">
    <original>R</original>
    <variation>S</variation>
    <location>
        <position position="145"/>
    </location>
</feature>
<feature type="sequence variant" id="VAR_014225" description="In non-small cell lung cancer cell lines; dbSNP:rs200439690." evidence="5">
    <original>T</original>
    <variation>S</variation>
    <location>
        <position position="207"/>
    </location>
</feature>
<feature type="mutagenesis site" description="In NAA80mut; abolished acetyltransferase activity; when associated with Q-148, D-151 and F-183." evidence="6">
    <original>W</original>
    <variation>F</variation>
    <location>
        <position position="83"/>
    </location>
</feature>
<feature type="mutagenesis site" description="In NAA80mut; abolished acetyltransferase activity; when associated with F-83, D-151 and F-183." evidence="6">
    <original>R</original>
    <variation>Q</variation>
    <location>
        <position position="148"/>
    </location>
</feature>
<feature type="mutagenesis site" description="In NAA80mut; abolished acetyltransferase activity; when associated with F-83, Q-148 and F-183." evidence="6">
    <original>G</original>
    <variation>D</variation>
    <location>
        <position position="151"/>
    </location>
</feature>
<feature type="mutagenesis site" description="In NAA80mut; abolished acetyltransferase activity; when associated with F-83, Q-148 and D-151." evidence="6">
    <original>Y</original>
    <variation>F</variation>
    <location>
        <position position="183"/>
    </location>
</feature>
<feature type="strand" evidence="17">
    <location>
        <begin position="61"/>
        <end position="64"/>
    </location>
</feature>
<feature type="helix" evidence="17">
    <location>
        <begin position="65"/>
        <end position="67"/>
    </location>
</feature>
<feature type="helix" evidence="17">
    <location>
        <begin position="69"/>
        <end position="71"/>
    </location>
</feature>
<feature type="helix" evidence="17">
    <location>
        <begin position="72"/>
        <end position="82"/>
    </location>
</feature>
<feature type="helix" evidence="17">
    <location>
        <begin position="87"/>
        <end position="95"/>
    </location>
</feature>
<feature type="strand" evidence="17">
    <location>
        <begin position="103"/>
        <end position="110"/>
    </location>
</feature>
<feature type="strand" evidence="17">
    <location>
        <begin position="112"/>
        <end position="116"/>
    </location>
</feature>
<feature type="strand" evidence="17">
    <location>
        <begin position="119"/>
        <end position="129"/>
    </location>
</feature>
<feature type="strand" evidence="17">
    <location>
        <begin position="135"/>
        <end position="143"/>
    </location>
</feature>
<feature type="helix" evidence="17">
    <location>
        <begin position="145"/>
        <end position="147"/>
    </location>
</feature>
<feature type="helix" evidence="17">
    <location>
        <begin position="152"/>
        <end position="166"/>
    </location>
</feature>
<feature type="strand" evidence="17">
    <location>
        <begin position="171"/>
        <end position="177"/>
    </location>
</feature>
<feature type="helix" evidence="17">
    <location>
        <begin position="180"/>
        <end position="185"/>
    </location>
</feature>
<feature type="helix" evidence="17">
    <location>
        <begin position="269"/>
        <end position="271"/>
    </location>
</feature>
<feature type="strand" evidence="17">
    <location>
        <begin position="280"/>
        <end position="285"/>
    </location>
</feature>
<name>NAA80_HUMAN</name>
<evidence type="ECO:0000250" key="1">
    <source>
        <dbReference type="UniProtKB" id="Q59DX8"/>
    </source>
</evidence>
<evidence type="ECO:0000255" key="2">
    <source>
        <dbReference type="PROSITE-ProRule" id="PRU00532"/>
    </source>
</evidence>
<evidence type="ECO:0000256" key="3">
    <source>
        <dbReference type="SAM" id="MobiDB-lite"/>
    </source>
</evidence>
<evidence type="ECO:0000269" key="4">
    <source>
    </source>
</evidence>
<evidence type="ECO:0000269" key="5">
    <source>
    </source>
</evidence>
<evidence type="ECO:0000269" key="6">
    <source>
    </source>
</evidence>
<evidence type="ECO:0000269" key="7">
    <source>
    </source>
</evidence>
<evidence type="ECO:0000269" key="8">
    <source>
    </source>
</evidence>
<evidence type="ECO:0000269" key="9">
    <source>
    </source>
</evidence>
<evidence type="ECO:0000303" key="10">
    <source>
    </source>
</evidence>
<evidence type="ECO:0000303" key="11">
    <source>
    </source>
</evidence>
<evidence type="ECO:0000303" key="12">
    <source>
    </source>
</evidence>
<evidence type="ECO:0000303" key="13">
    <source>
    </source>
</evidence>
<evidence type="ECO:0000303" key="14">
    <source>
    </source>
</evidence>
<evidence type="ECO:0000305" key="15"/>
<evidence type="ECO:0000312" key="16">
    <source>
        <dbReference type="HGNC" id="HGNC:30252"/>
    </source>
</evidence>
<evidence type="ECO:0007829" key="17">
    <source>
        <dbReference type="PDB" id="6NBE"/>
    </source>
</evidence>
<comment type="function">
    <text evidence="4 6 7 8">N-alpha-acetyltransferase that specifically mediates the acetylation of the acidic amino terminus of processed forms of beta- and gamma-actin (ACTB and ACTG, respectively) (PubMed:29581253, PubMed:30028079). N-terminal acetylation of processed beta- and gamma-actin regulates actin filament depolymerization and elongation (PubMed:29581253). In vivo, preferentially displays N-terminal acetyltransferase activity towards acid N-terminal sequences starting with Asp-Asp-Asp and Glu-Glu-Glu (PubMed:29581253, PubMed:30028079). In vitro, shows high activity towards Met-Asp-Glu-Leu and Met-Asp-Asp-Asp (PubMed:10644992, PubMed:29581307). May act as a tumor suppressor (PubMed:10644992).</text>
</comment>
<comment type="catalytic activity">
    <reaction evidence="6 7">
        <text>N-terminal L-aspartyl-L-aspartyl-L-aspartyl-[protein] + acetyl-CoA = N-terminal N-acetyl-L-aspartyl-L-aspartyl-L-aspartyl-[protein] + CoA + H(+)</text>
        <dbReference type="Rhea" id="RHEA:57328"/>
        <dbReference type="Rhea" id="RHEA-COMP:14863"/>
        <dbReference type="Rhea" id="RHEA-COMP:14864"/>
        <dbReference type="ChEBI" id="CHEBI:15378"/>
        <dbReference type="ChEBI" id="CHEBI:57287"/>
        <dbReference type="ChEBI" id="CHEBI:57288"/>
        <dbReference type="ChEBI" id="CHEBI:141602"/>
        <dbReference type="ChEBI" id="CHEBI:141604"/>
    </reaction>
</comment>
<comment type="catalytic activity">
    <reaction evidence="6 7">
        <text>N-terminal L-glutamyl-L-glutamyl-L-glutamyl-[protein] + acetyl-CoA = N-terminal N-acetyl-L-glutamyl-L-glutamyl-L-glutamyl-[protein] + CoA + H(+)</text>
        <dbReference type="Rhea" id="RHEA:57324"/>
        <dbReference type="Rhea" id="RHEA-COMP:14865"/>
        <dbReference type="Rhea" id="RHEA-COMP:14866"/>
        <dbReference type="ChEBI" id="CHEBI:15378"/>
        <dbReference type="ChEBI" id="CHEBI:57287"/>
        <dbReference type="ChEBI" id="CHEBI:57288"/>
        <dbReference type="ChEBI" id="CHEBI:141603"/>
        <dbReference type="ChEBI" id="CHEBI:141606"/>
    </reaction>
</comment>
<comment type="interaction">
    <interactant intactId="EBI-12126220">
        <id>Q93015-2</id>
    </interactant>
    <interactant intactId="EBI-11339910">
        <id>Q8IYS1</id>
        <label>PM20D2</label>
    </interactant>
    <organismsDiffer>false</organismsDiffer>
    <experiments>3</experiments>
</comment>
<comment type="interaction">
    <interactant intactId="EBI-12126220">
        <id>Q93015-2</id>
    </interactant>
    <interactant intactId="EBI-724333">
        <id>Q96CD2</id>
        <label>PPCDC</label>
    </interactant>
    <organismsDiffer>false</organismsDiffer>
    <experiments>3</experiments>
</comment>
<comment type="interaction">
    <interactant intactId="EBI-12126220">
        <id>Q93015-2</id>
    </interactant>
    <interactant intactId="EBI-749295">
        <id>O75716</id>
        <label>STK16</label>
    </interactant>
    <organismsDiffer>false</organismsDiffer>
    <experiments>5</experiments>
</comment>
<comment type="subcellular location">
    <subcellularLocation>
        <location evidence="4 8">Cytoplasm</location>
        <location evidence="4 8">Cytosol</location>
    </subcellularLocation>
</comment>
<comment type="alternative products">
    <event type="alternative splicing"/>
    <isoform>
        <id>Q93015-1</id>
        <name>1</name>
        <sequence type="displayed"/>
    </isoform>
    <isoform>
        <id>Q93015-2</id>
        <name>2</name>
        <sequence type="described" ref="VSP_037187"/>
    </isoform>
</comment>
<comment type="tissue specificity">
    <text evidence="5">Strongly expressed in heart and skeletal muscle, followed by brain and pancreas, with weak expression in kidney, liver, and lung and no expression in placenta.</text>
</comment>
<comment type="disease" evidence="9">
    <disease id="DI-06913">
        <name>Auroneurodental syndrome</name>
        <acronym>ANDS</acronym>
        <description>An autosomal recessive syndrome characterized by progressive high-frequency sensorineural hearing loss, craniofacial dysmorphism, developmental delay and mild proximal and axial muscle weakness.</description>
        <dbReference type="MIM" id="620830"/>
    </disease>
    <text>The disease is caused by variants affecting the gene represented in this entry.</text>
</comment>
<comment type="similarity">
    <text evidence="15">Belongs to the acetyltransferase family.</text>
</comment>
<gene>
    <name evidence="12 16" type="primary">NAA80</name>
    <name evidence="10" type="synonym">FUS2</name>
    <name evidence="14" type="synonym">NAT6</name>
</gene>
<keyword id="KW-0002">3D-structure</keyword>
<keyword id="KW-0012">Acyltransferase</keyword>
<keyword id="KW-0025">Alternative splicing</keyword>
<keyword id="KW-0963">Cytoplasm</keyword>
<keyword id="KW-0209">Deafness</keyword>
<keyword id="KW-0225">Disease variant</keyword>
<keyword id="KW-1267">Proteomics identification</keyword>
<keyword id="KW-1185">Reference proteome</keyword>
<keyword id="KW-0808">Transferase</keyword>
<keyword id="KW-0043">Tumor suppressor</keyword>
<proteinExistence type="evidence at protein level"/>
<organism>
    <name type="scientific">Homo sapiens</name>
    <name type="common">Human</name>
    <dbReference type="NCBI Taxonomy" id="9606"/>
    <lineage>
        <taxon>Eukaryota</taxon>
        <taxon>Metazoa</taxon>
        <taxon>Chordata</taxon>
        <taxon>Craniata</taxon>
        <taxon>Vertebrata</taxon>
        <taxon>Euteleostomi</taxon>
        <taxon>Mammalia</taxon>
        <taxon>Eutheria</taxon>
        <taxon>Euarchontoglires</taxon>
        <taxon>Primates</taxon>
        <taxon>Haplorrhini</taxon>
        <taxon>Catarrhini</taxon>
        <taxon>Hominidae</taxon>
        <taxon>Homo</taxon>
    </lineage>
</organism>